<name>KIC_ARATH</name>
<gene>
    <name evidence="6" type="primary">KIC</name>
    <name evidence="8" type="ordered locus">At2g46600</name>
    <name evidence="9" type="ORF">F13A10.13</name>
</gene>
<keyword id="KW-0002">3D-structure</keyword>
<keyword id="KW-0106">Calcium</keyword>
<keyword id="KW-0479">Metal-binding</keyword>
<keyword id="KW-1185">Reference proteome</keyword>
<reference key="1">
    <citation type="journal article" date="2004" name="Plant Cell">
        <title>KIC, a novel Ca2+ binding protein with one EF-hand motif, interacts with a microtubule motor protein and regulates trichome morphogenesis.</title>
        <authorList>
            <person name="Reddy V.S."/>
            <person name="Day I.S."/>
            <person name="Thomas T."/>
            <person name="Reddy A.S.N."/>
        </authorList>
    </citation>
    <scope>NUCLEOTIDE SEQUENCE [MRNA]</scope>
    <scope>FUNCTION</scope>
    <scope>TISSUE SPECIFICITY</scope>
    <scope>INTERACTION WITH KCBP</scope>
</reference>
<reference key="2">
    <citation type="journal article" date="1999" name="Nature">
        <title>Sequence and analysis of chromosome 2 of the plant Arabidopsis thaliana.</title>
        <authorList>
            <person name="Lin X."/>
            <person name="Kaul S."/>
            <person name="Rounsley S.D."/>
            <person name="Shea T.P."/>
            <person name="Benito M.-I."/>
            <person name="Town C.D."/>
            <person name="Fujii C.Y."/>
            <person name="Mason T.M."/>
            <person name="Bowman C.L."/>
            <person name="Barnstead M.E."/>
            <person name="Feldblyum T.V."/>
            <person name="Buell C.R."/>
            <person name="Ketchum K.A."/>
            <person name="Lee J.J."/>
            <person name="Ronning C.M."/>
            <person name="Koo H.L."/>
            <person name="Moffat K.S."/>
            <person name="Cronin L.A."/>
            <person name="Shen M."/>
            <person name="Pai G."/>
            <person name="Van Aken S."/>
            <person name="Umayam L."/>
            <person name="Tallon L.J."/>
            <person name="Gill J.E."/>
            <person name="Adams M.D."/>
            <person name="Carrera A.J."/>
            <person name="Creasy T.H."/>
            <person name="Goodman H.M."/>
            <person name="Somerville C.R."/>
            <person name="Copenhaver G.P."/>
            <person name="Preuss D."/>
            <person name="Nierman W.C."/>
            <person name="White O."/>
            <person name="Eisen J.A."/>
            <person name="Salzberg S.L."/>
            <person name="Fraser C.M."/>
            <person name="Venter J.C."/>
        </authorList>
    </citation>
    <scope>NUCLEOTIDE SEQUENCE [LARGE SCALE GENOMIC DNA]</scope>
    <source>
        <strain>cv. Columbia</strain>
    </source>
</reference>
<reference key="3">
    <citation type="journal article" date="2017" name="Plant J.">
        <title>Araport11: a complete reannotation of the Arabidopsis thaliana reference genome.</title>
        <authorList>
            <person name="Cheng C.Y."/>
            <person name="Krishnakumar V."/>
            <person name="Chan A.P."/>
            <person name="Thibaud-Nissen F."/>
            <person name="Schobel S."/>
            <person name="Town C.D."/>
        </authorList>
    </citation>
    <scope>GENOME REANNOTATION</scope>
    <source>
        <strain>cv. Columbia</strain>
    </source>
</reference>
<reference key="4">
    <citation type="journal article" date="2003" name="Science">
        <title>Empirical analysis of transcriptional activity in the Arabidopsis genome.</title>
        <authorList>
            <person name="Yamada K."/>
            <person name="Lim J."/>
            <person name="Dale J.M."/>
            <person name="Chen H."/>
            <person name="Shinn P."/>
            <person name="Palm C.J."/>
            <person name="Southwick A.M."/>
            <person name="Wu H.C."/>
            <person name="Kim C.J."/>
            <person name="Nguyen M."/>
            <person name="Pham P.K."/>
            <person name="Cheuk R.F."/>
            <person name="Karlin-Newmann G."/>
            <person name="Liu S.X."/>
            <person name="Lam B."/>
            <person name="Sakano H."/>
            <person name="Wu T."/>
            <person name="Yu G."/>
            <person name="Miranda M."/>
            <person name="Quach H.L."/>
            <person name="Tripp M."/>
            <person name="Chang C.H."/>
            <person name="Lee J.M."/>
            <person name="Toriumi M.J."/>
            <person name="Chan M.M."/>
            <person name="Tang C.C."/>
            <person name="Onodera C.S."/>
            <person name="Deng J.M."/>
            <person name="Akiyama K."/>
            <person name="Ansari Y."/>
            <person name="Arakawa T."/>
            <person name="Banh J."/>
            <person name="Banno F."/>
            <person name="Bowser L."/>
            <person name="Brooks S.Y."/>
            <person name="Carninci P."/>
            <person name="Chao Q."/>
            <person name="Choy N."/>
            <person name="Enju A."/>
            <person name="Goldsmith A.D."/>
            <person name="Gurjal M."/>
            <person name="Hansen N.F."/>
            <person name="Hayashizaki Y."/>
            <person name="Johnson-Hopson C."/>
            <person name="Hsuan V.W."/>
            <person name="Iida K."/>
            <person name="Karnes M."/>
            <person name="Khan S."/>
            <person name="Koesema E."/>
            <person name="Ishida J."/>
            <person name="Jiang P.X."/>
            <person name="Jones T."/>
            <person name="Kawai J."/>
            <person name="Kamiya A."/>
            <person name="Meyers C."/>
            <person name="Nakajima M."/>
            <person name="Narusaka M."/>
            <person name="Seki M."/>
            <person name="Sakurai T."/>
            <person name="Satou M."/>
            <person name="Tamse R."/>
            <person name="Vaysberg M."/>
            <person name="Wallender E.K."/>
            <person name="Wong C."/>
            <person name="Yamamura Y."/>
            <person name="Yuan S."/>
            <person name="Shinozaki K."/>
            <person name="Davis R.W."/>
            <person name="Theologis A."/>
            <person name="Ecker J.R."/>
        </authorList>
    </citation>
    <scope>NUCLEOTIDE SEQUENCE [LARGE SCALE MRNA]</scope>
    <source>
        <strain>cv. Columbia</strain>
    </source>
</reference>
<reference key="5">
    <citation type="submission" date="2002-03" db="EMBL/GenBank/DDBJ databases">
        <title>Full-length cDNA from Arabidopsis thaliana.</title>
        <authorList>
            <person name="Brover V.V."/>
            <person name="Troukhan M.E."/>
            <person name="Alexandrov N.A."/>
            <person name="Lu Y.-P."/>
            <person name="Flavell R.B."/>
            <person name="Feldmann K.A."/>
        </authorList>
    </citation>
    <scope>NUCLEOTIDE SEQUENCE [LARGE SCALE MRNA]</scope>
</reference>
<reference key="6">
    <citation type="journal article" date="2009" name="J. Biol. Chem.">
        <title>The calmodulin-related calcium sensor CML42 plays a role in trichome branching.</title>
        <authorList>
            <person name="Dobney S."/>
            <person name="Chiasson D."/>
            <person name="Lam P."/>
            <person name="Smith S.P."/>
            <person name="Snedden W.A."/>
        </authorList>
    </citation>
    <scope>INTERACTION WITH CML42</scope>
</reference>
<reference key="7">
    <citation type="journal article" date="2016" name="New Phytol.">
        <title>ABC transporter PEN3/PDR8/ABCG36 interacts with calmodulin that, like PEN3, is required for Arabidopsis nonhost resistance.</title>
        <authorList>
            <person name="Campe R."/>
            <person name="Langenbach C."/>
            <person name="Leissing F."/>
            <person name="Popescu G.V."/>
            <person name="Popescu S.C."/>
            <person name="Goellner K."/>
            <person name="Beckers G.J."/>
            <person name="Conrath U."/>
        </authorList>
    </citation>
    <scope>INTERACTION WITH ABCG36</scope>
    <source>
        <strain>cv. Columbia</strain>
    </source>
</reference>
<reference key="8">
    <citation type="journal article" date="2009" name="Proc. Natl. Acad. Sci. U.S.A.">
        <title>Structure of the complex of a mitotic kinesin with its calcium binding regulator.</title>
        <authorList>
            <person name="Vinogradova M.V."/>
            <person name="Malanina G.G."/>
            <person name="Reddy A.S."/>
            <person name="Fletterick R.J."/>
        </authorList>
    </citation>
    <scope>X-RAY CRYSTALLOGRAPHY (2.40 ANGSTROMS) IN COMPLEX WITH CALCIUM ION AND KCBP</scope>
</reference>
<protein>
    <recommendedName>
        <fullName evidence="6">Calcium-binding protein KIC</fullName>
    </recommendedName>
    <alternativeName>
        <fullName evidence="6">KCBP-interacting calcium-binding protein</fullName>
    </alternativeName>
</protein>
<accession>Q9ZPX9</accession>
<accession>Q8L9A5</accession>
<accession>Q94EH6</accession>
<proteinExistence type="evidence at protein level"/>
<evidence type="ECO:0000255" key="1">
    <source>
        <dbReference type="PROSITE-ProRule" id="PRU00448"/>
    </source>
</evidence>
<evidence type="ECO:0000269" key="2">
    <source>
    </source>
</evidence>
<evidence type="ECO:0000269" key="3">
    <source>
    </source>
</evidence>
<evidence type="ECO:0000269" key="4">
    <source>
    </source>
</evidence>
<evidence type="ECO:0000269" key="5">
    <source>
    </source>
</evidence>
<evidence type="ECO:0000303" key="6">
    <source>
    </source>
</evidence>
<evidence type="ECO:0000305" key="7"/>
<evidence type="ECO:0000312" key="8">
    <source>
        <dbReference type="Araport" id="AT2G46600"/>
    </source>
</evidence>
<evidence type="ECO:0000312" key="9">
    <source>
        <dbReference type="EMBL" id="AAD20170.2"/>
    </source>
</evidence>
<evidence type="ECO:0007829" key="10">
    <source>
        <dbReference type="PDB" id="3H4S"/>
    </source>
</evidence>
<dbReference type="EMBL" id="AY363866">
    <property type="protein sequence ID" value="AAR17001.1"/>
    <property type="molecule type" value="mRNA"/>
</dbReference>
<dbReference type="EMBL" id="AC006418">
    <property type="protein sequence ID" value="AAD20170.2"/>
    <property type="molecule type" value="Genomic_DNA"/>
</dbReference>
<dbReference type="EMBL" id="CP002685">
    <property type="protein sequence ID" value="AEC10727.1"/>
    <property type="molecule type" value="Genomic_DNA"/>
</dbReference>
<dbReference type="EMBL" id="AF410313">
    <property type="protein sequence ID" value="AAK95299.1"/>
    <property type="molecule type" value="mRNA"/>
</dbReference>
<dbReference type="EMBL" id="AY093725">
    <property type="protein sequence ID" value="AAM10349.1"/>
    <property type="molecule type" value="mRNA"/>
</dbReference>
<dbReference type="EMBL" id="AY088553">
    <property type="protein sequence ID" value="AAM66085.1"/>
    <property type="status" value="ALT_INIT"/>
    <property type="molecule type" value="mRNA"/>
</dbReference>
<dbReference type="PIR" id="H84904">
    <property type="entry name" value="H84904"/>
</dbReference>
<dbReference type="RefSeq" id="NP_566082.1">
    <property type="nucleotide sequence ID" value="NM_130225.3"/>
</dbReference>
<dbReference type="PDB" id="3H4S">
    <property type="method" value="X-ray"/>
    <property type="resolution" value="2.40 A"/>
    <property type="chains" value="E=1-135"/>
</dbReference>
<dbReference type="PDBsum" id="3H4S"/>
<dbReference type="SMR" id="Q9ZPX9"/>
<dbReference type="BioGRID" id="4607">
    <property type="interactions" value="3"/>
</dbReference>
<dbReference type="DIP" id="DIP-52859N"/>
<dbReference type="FunCoup" id="Q9ZPX9">
    <property type="interactions" value="288"/>
</dbReference>
<dbReference type="IntAct" id="Q9ZPX9">
    <property type="interactions" value="2"/>
</dbReference>
<dbReference type="STRING" id="3702.Q9ZPX9"/>
<dbReference type="PaxDb" id="3702-AT2G46600.1"/>
<dbReference type="ProteomicsDB" id="250668"/>
<dbReference type="EnsemblPlants" id="AT2G46600.1">
    <property type="protein sequence ID" value="AT2G46600.1"/>
    <property type="gene ID" value="AT2G46600"/>
</dbReference>
<dbReference type="GeneID" id="819272"/>
<dbReference type="Gramene" id="AT2G46600.1">
    <property type="protein sequence ID" value="AT2G46600.1"/>
    <property type="gene ID" value="AT2G46600"/>
</dbReference>
<dbReference type="KEGG" id="ath:AT2G46600"/>
<dbReference type="Araport" id="AT2G46600"/>
<dbReference type="TAIR" id="AT2G46600"/>
<dbReference type="eggNOG" id="KOG0028">
    <property type="taxonomic scope" value="Eukaryota"/>
</dbReference>
<dbReference type="HOGENOM" id="CLU_137017_0_0_1"/>
<dbReference type="InParanoid" id="Q9ZPX9"/>
<dbReference type="OMA" id="MQDAEVW"/>
<dbReference type="PhylomeDB" id="Q9ZPX9"/>
<dbReference type="EvolutionaryTrace" id="Q9ZPX9"/>
<dbReference type="PRO" id="PR:Q9ZPX9"/>
<dbReference type="Proteomes" id="UP000006548">
    <property type="component" value="Chromosome 2"/>
</dbReference>
<dbReference type="ExpressionAtlas" id="Q9ZPX9">
    <property type="expression patterns" value="baseline and differential"/>
</dbReference>
<dbReference type="GO" id="GO:0005509">
    <property type="term" value="F:calcium ion binding"/>
    <property type="evidence" value="ECO:0000314"/>
    <property type="project" value="UniProtKB"/>
</dbReference>
<dbReference type="GO" id="GO:0010091">
    <property type="term" value="P:trichome branching"/>
    <property type="evidence" value="ECO:0000315"/>
    <property type="project" value="UniProtKB"/>
</dbReference>
<dbReference type="FunFam" id="1.10.238.10:FF:000335">
    <property type="entry name" value="Calcium-binding protein KIC"/>
    <property type="match status" value="1"/>
</dbReference>
<dbReference type="Gene3D" id="1.10.238.10">
    <property type="entry name" value="EF-hand"/>
    <property type="match status" value="1"/>
</dbReference>
<dbReference type="InterPro" id="IPR011992">
    <property type="entry name" value="EF-hand-dom_pair"/>
</dbReference>
<dbReference type="InterPro" id="IPR018247">
    <property type="entry name" value="EF_Hand_1_Ca_BS"/>
</dbReference>
<dbReference type="InterPro" id="IPR002048">
    <property type="entry name" value="EF_hand_dom"/>
</dbReference>
<dbReference type="InterPro" id="IPR044205">
    <property type="entry name" value="KIC/PBP1/KRP1"/>
</dbReference>
<dbReference type="PANTHER" id="PTHR47319">
    <property type="entry name" value="CALCIUM-BINDING PROTEIN KIC"/>
    <property type="match status" value="1"/>
</dbReference>
<dbReference type="PANTHER" id="PTHR47319:SF4">
    <property type="entry name" value="CALCIUM-BINDING PROTEIN KIC"/>
    <property type="match status" value="1"/>
</dbReference>
<dbReference type="Pfam" id="PF13833">
    <property type="entry name" value="EF-hand_8"/>
    <property type="match status" value="1"/>
</dbReference>
<dbReference type="SUPFAM" id="SSF47473">
    <property type="entry name" value="EF-hand"/>
    <property type="match status" value="1"/>
</dbReference>
<dbReference type="PROSITE" id="PS00018">
    <property type="entry name" value="EF_HAND_1"/>
    <property type="match status" value="1"/>
</dbReference>
<dbReference type="PROSITE" id="PS50222">
    <property type="entry name" value="EF_HAND_2"/>
    <property type="match status" value="1"/>
</dbReference>
<organism>
    <name type="scientific">Arabidopsis thaliana</name>
    <name type="common">Mouse-ear cress</name>
    <dbReference type="NCBI Taxonomy" id="3702"/>
    <lineage>
        <taxon>Eukaryota</taxon>
        <taxon>Viridiplantae</taxon>
        <taxon>Streptophyta</taxon>
        <taxon>Embryophyta</taxon>
        <taxon>Tracheophyta</taxon>
        <taxon>Spermatophyta</taxon>
        <taxon>Magnoliopsida</taxon>
        <taxon>eudicotyledons</taxon>
        <taxon>Gunneridae</taxon>
        <taxon>Pentapetalae</taxon>
        <taxon>rosids</taxon>
        <taxon>malvids</taxon>
        <taxon>Brassicales</taxon>
        <taxon>Brassicaceae</taxon>
        <taxon>Camelineae</taxon>
        <taxon>Arabidopsis</taxon>
    </lineage>
</organism>
<comment type="function">
    <text evidence="2">Calcium-binding regulatory protein that interacts with kinesin motor protein KCBP in a calcium-dependent manner. Inhibits KCBP microtubule binding activity and microtubule-stimulated ATPase activity. Involved in the regulation of trichome branching through its interaction with KCBP.</text>
</comment>
<comment type="subunit">
    <text evidence="2 3 4 5">Interacts with KCBP (via C-terminus). KIC and calmodulin show competitive binding to KCBP. Interacts with CML42. Binds to ABCG36 (PubMed:26315018).</text>
</comment>
<comment type="interaction">
    <interactant intactId="EBI-2353491">
        <id>Q9ZPX9</id>
    </interactant>
    <interactant intactId="EBI-2434394">
        <id>Q9SVG9</id>
        <label>CML42</label>
    </interactant>
    <organismsDiffer>false</organismsDiffer>
    <experiments>4</experiments>
</comment>
<comment type="interaction">
    <interactant intactId="EBI-2353491">
        <id>Q9ZPX9</id>
    </interactant>
    <interactant intactId="EBI-1749651">
        <id>Q9FHN8</id>
        <label>KIN14E</label>
    </interactant>
    <organismsDiffer>false</organismsDiffer>
    <experiments>5</experiments>
</comment>
<comment type="interaction">
    <interactant intactId="EBI-2353491">
        <id>Q9ZPX9</id>
    </interactant>
    <interactant intactId="EBI-15777922">
        <id>Q9FHN8-1</id>
        <label>KIN14E</label>
    </interactant>
    <organismsDiffer>false</organismsDiffer>
    <experiments>2</experiments>
</comment>
<comment type="tissue specificity">
    <text evidence="2">Expressed in stems, leaves and flowers.</text>
</comment>
<comment type="miscellaneous">
    <text>Plants overexpressing KIC1 causes a reduction in the number of trichome branches.</text>
</comment>
<comment type="sequence caution" evidence="7">
    <conflict type="erroneous initiation">
        <sequence resource="EMBL-CDS" id="AAM66085"/>
    </conflict>
    <text>Truncated N-terminus.</text>
</comment>
<sequence>MEPTEKSMLLETTSTTKMETKYEDMLPVMAEKMDVEEFVSELCKGFSLLADPERHLITAESLRRNSGILGIEGMSKEDAQGMVREGDLDGDGALNQTEFCVLMVRLSPEMMEDAETWLEKALTQELCNHNLSSMP</sequence>
<feature type="chain" id="PRO_0000403272" description="Calcium-binding protein KIC">
    <location>
        <begin position="1"/>
        <end position="135"/>
    </location>
</feature>
<feature type="domain" description="EF-hand" evidence="1">
    <location>
        <begin position="74"/>
        <end position="109"/>
    </location>
</feature>
<feature type="binding site" evidence="1">
    <location>
        <position position="87"/>
    </location>
    <ligand>
        <name>Ca(2+)</name>
        <dbReference type="ChEBI" id="CHEBI:29108"/>
    </ligand>
</feature>
<feature type="binding site" evidence="1">
    <location>
        <position position="89"/>
    </location>
    <ligand>
        <name>Ca(2+)</name>
        <dbReference type="ChEBI" id="CHEBI:29108"/>
    </ligand>
</feature>
<feature type="binding site" evidence="1">
    <location>
        <position position="91"/>
    </location>
    <ligand>
        <name>Ca(2+)</name>
        <dbReference type="ChEBI" id="CHEBI:29108"/>
    </ligand>
</feature>
<feature type="binding site" evidence="1">
    <location>
        <position position="98"/>
    </location>
    <ligand>
        <name>Ca(2+)</name>
        <dbReference type="ChEBI" id="CHEBI:29108"/>
    </ligand>
</feature>
<feature type="helix" evidence="10">
    <location>
        <begin position="35"/>
        <end position="49"/>
    </location>
</feature>
<feature type="turn" evidence="10">
    <location>
        <begin position="52"/>
        <end position="55"/>
    </location>
</feature>
<feature type="helix" evidence="10">
    <location>
        <begin position="59"/>
        <end position="65"/>
    </location>
</feature>
<feature type="helix" evidence="10">
    <location>
        <begin position="66"/>
        <end position="69"/>
    </location>
</feature>
<feature type="helix" evidence="10">
    <location>
        <begin position="76"/>
        <end position="86"/>
    </location>
</feature>
<feature type="strand" evidence="10">
    <location>
        <begin position="91"/>
        <end position="94"/>
    </location>
</feature>
<feature type="helix" evidence="10">
    <location>
        <begin position="96"/>
        <end position="113"/>
    </location>
</feature>
<feature type="helix" evidence="10">
    <location>
        <begin position="114"/>
        <end position="117"/>
    </location>
</feature>
<feature type="helix" evidence="10">
    <location>
        <begin position="119"/>
        <end position="124"/>
    </location>
</feature>